<sequence length="154" mass="17894">MSARCGSQARTLYELCDQCNITLPTLQIDCVFCKTVLKTAEVLAFAFRELYVVWRDDFPHAACPRCLDLHGKVNQYRNFRYAAYAPTVEEETGLTILQVRIRCCKCHKPLSPVEKTNHIVKKTQFFKLKDSWTGYCLHCWKKCMEKGQRSETLC</sequence>
<dbReference type="EMBL" id="X74478">
    <property type="protein sequence ID" value="CAA52567.1"/>
    <property type="molecule type" value="Genomic_DNA"/>
</dbReference>
<dbReference type="PIR" id="S36555">
    <property type="entry name" value="S36555"/>
</dbReference>
<dbReference type="SMR" id="P36812"/>
<dbReference type="Proteomes" id="UP000009121">
    <property type="component" value="Genome"/>
</dbReference>
<dbReference type="GO" id="GO:0030430">
    <property type="term" value="C:host cell cytoplasm"/>
    <property type="evidence" value="ECO:0007669"/>
    <property type="project" value="UniProtKB-SubCell"/>
</dbReference>
<dbReference type="GO" id="GO:0042025">
    <property type="term" value="C:host cell nucleus"/>
    <property type="evidence" value="ECO:0007669"/>
    <property type="project" value="UniProtKB-SubCell"/>
</dbReference>
<dbReference type="GO" id="GO:0003677">
    <property type="term" value="F:DNA binding"/>
    <property type="evidence" value="ECO:0007669"/>
    <property type="project" value="UniProtKB-UniRule"/>
</dbReference>
<dbReference type="GO" id="GO:0008270">
    <property type="term" value="F:zinc ion binding"/>
    <property type="evidence" value="ECO:0007669"/>
    <property type="project" value="UniProtKB-KW"/>
</dbReference>
<dbReference type="GO" id="GO:0006351">
    <property type="term" value="P:DNA-templated transcription"/>
    <property type="evidence" value="ECO:0007669"/>
    <property type="project" value="UniProtKB-UniRule"/>
</dbReference>
<dbReference type="GO" id="GO:0006355">
    <property type="term" value="P:regulation of DNA-templated transcription"/>
    <property type="evidence" value="ECO:0007669"/>
    <property type="project" value="UniProtKB-UniRule"/>
</dbReference>
<dbReference type="GO" id="GO:0052150">
    <property type="term" value="P:symbiont-mediated perturbation of host apoptosis"/>
    <property type="evidence" value="ECO:0007669"/>
    <property type="project" value="UniProtKB-KW"/>
</dbReference>
<dbReference type="GO" id="GO:0039648">
    <property type="term" value="P:symbiont-mediated perturbation of host ubiquitin-like protein modification"/>
    <property type="evidence" value="ECO:0007669"/>
    <property type="project" value="UniProtKB-UniRule"/>
</dbReference>
<dbReference type="GO" id="GO:0052170">
    <property type="term" value="P:symbiont-mediated suppression of host innate immune response"/>
    <property type="evidence" value="ECO:0007669"/>
    <property type="project" value="UniProtKB-KW"/>
</dbReference>
<dbReference type="GO" id="GO:0039502">
    <property type="term" value="P:symbiont-mediated suppression of host type I interferon-mediated signaling pathway"/>
    <property type="evidence" value="ECO:0007669"/>
    <property type="project" value="UniProtKB-UniRule"/>
</dbReference>
<dbReference type="Gene3D" id="3.30.240.40">
    <property type="entry name" value="E6 early regulatory protein"/>
    <property type="match status" value="2"/>
</dbReference>
<dbReference type="HAMAP" id="MF_04006">
    <property type="entry name" value="HPV_E6"/>
    <property type="match status" value="1"/>
</dbReference>
<dbReference type="InterPro" id="IPR001334">
    <property type="entry name" value="E6"/>
</dbReference>
<dbReference type="InterPro" id="IPR038575">
    <property type="entry name" value="E6_sf"/>
</dbReference>
<dbReference type="Pfam" id="PF00518">
    <property type="entry name" value="E6"/>
    <property type="match status" value="1"/>
</dbReference>
<dbReference type="SUPFAM" id="SSF161229">
    <property type="entry name" value="E6 C-terminal domain-like"/>
    <property type="match status" value="2"/>
</dbReference>
<accession>P36812</accession>
<proteinExistence type="inferred from homology"/>
<keyword id="KW-0010">Activator</keyword>
<keyword id="KW-0238">DNA-binding</keyword>
<keyword id="KW-0244">Early protein</keyword>
<keyword id="KW-1035">Host cytoplasm</keyword>
<keyword id="KW-1048">Host nucleus</keyword>
<keyword id="KW-0945">Host-virus interaction</keyword>
<keyword id="KW-1090">Inhibition of host innate immune response by virus</keyword>
<keyword id="KW-0479">Metal-binding</keyword>
<keyword id="KW-1119">Modulation of host cell apoptosis by virus</keyword>
<keyword id="KW-0804">Transcription</keyword>
<keyword id="KW-0805">Transcription regulation</keyword>
<keyword id="KW-0899">Viral immunoevasion</keyword>
<keyword id="KW-0862">Zinc</keyword>
<keyword id="KW-0863">Zinc-finger</keyword>
<name>VE6_HPV40</name>
<organismHost>
    <name type="scientific">Homo sapiens</name>
    <name type="common">Human</name>
    <dbReference type="NCBI Taxonomy" id="9606"/>
</organismHost>
<comment type="function">
    <text evidence="1">Plays a major role in the induction and maintenance of cellular transformation. E6 associates with host UBE3A/E6-AP ubiquitin-protein ligase and modulates its activity. Sequesters tumor suppressor TP53 in the host cytoplasm and modulates its activity by interacting with host EP300 that results in the reduction of TP53 acetylation and activation. In turn, apoptosis induced by DNA damage is inhibited. E6 also protects host keratinocytes from apoptosis by mediating the degradation of host BAK1. May also inhibit host immune response.</text>
</comment>
<comment type="subunit">
    <text evidence="1">Forms homodimers. Interacts with ubiquitin-protein ligase UBE3A/E6-AP; this interaction stimulates UBE3A ubiquitin activity. Interacts with host TP53 and EP300; this interaction inhibits TP53 activity.</text>
</comment>
<comment type="subcellular location">
    <subcellularLocation>
        <location evidence="1">Host cytoplasm</location>
    </subcellularLocation>
    <subcellularLocation>
        <location evidence="1">Host nucleus</location>
    </subcellularLocation>
</comment>
<comment type="miscellaneous">
    <text evidence="1">Belongs to the low risk human alphapapillomavirus family. The cancer-causing human papillomavirus E6 protein has a unique carboxy terminal PDZ domain containing substrate but low risk E6s do not possess this domain.</text>
</comment>
<comment type="similarity">
    <text evidence="2">Belongs to the papillomaviridae E6 protein family.</text>
</comment>
<reference key="1">
    <citation type="journal article" date="1994" name="Curr. Top. Microbiol. Immunol.">
        <title>Primer-directed sequencing of human papillomavirus types.</title>
        <authorList>
            <person name="Delius H."/>
            <person name="Hofmann B."/>
        </authorList>
    </citation>
    <scope>NUCLEOTIDE SEQUENCE [GENOMIC DNA]</scope>
</reference>
<organism>
    <name type="scientific">Human papillomavirus 40</name>
    <dbReference type="NCBI Taxonomy" id="10615"/>
    <lineage>
        <taxon>Viruses</taxon>
        <taxon>Monodnaviria</taxon>
        <taxon>Shotokuvirae</taxon>
        <taxon>Cossaviricota</taxon>
        <taxon>Papovaviricetes</taxon>
        <taxon>Zurhausenvirales</taxon>
        <taxon>Papillomaviridae</taxon>
        <taxon>Firstpapillomavirinae</taxon>
        <taxon>Alphapapillomavirus</taxon>
        <taxon>Alphapapillomavirus 8</taxon>
    </lineage>
</organism>
<evidence type="ECO:0000255" key="1">
    <source>
        <dbReference type="HAMAP-Rule" id="MF_04006"/>
    </source>
</evidence>
<evidence type="ECO:0000305" key="2"/>
<feature type="chain" id="PRO_0000133359" description="Protein E6">
    <location>
        <begin position="1"/>
        <end position="154"/>
    </location>
</feature>
<feature type="zinc finger region" evidence="1">
    <location>
        <begin position="30"/>
        <end position="66"/>
    </location>
</feature>
<feature type="zinc finger region" evidence="1">
    <location>
        <begin position="103"/>
        <end position="139"/>
    </location>
</feature>
<gene>
    <name evidence="1" type="primary">E6</name>
</gene>
<protein>
    <recommendedName>
        <fullName evidence="1">Protein E6</fullName>
    </recommendedName>
</protein>